<evidence type="ECO:0000255" key="1">
    <source>
        <dbReference type="HAMAP-Rule" id="MF_00184"/>
    </source>
</evidence>
<evidence type="ECO:0000255" key="2">
    <source>
        <dbReference type="PROSITE-ProRule" id="PRU01228"/>
    </source>
</evidence>
<dbReference type="EC" id="6.1.1.3" evidence="1"/>
<dbReference type="EMBL" id="CP000010">
    <property type="protein sequence ID" value="AAU49312.1"/>
    <property type="molecule type" value="Genomic_DNA"/>
</dbReference>
<dbReference type="RefSeq" id="WP_004191232.1">
    <property type="nucleotide sequence ID" value="NC_006348.1"/>
</dbReference>
<dbReference type="RefSeq" id="YP_102787.1">
    <property type="nucleotide sequence ID" value="NC_006348.1"/>
</dbReference>
<dbReference type="SMR" id="Q62KI2"/>
<dbReference type="GeneID" id="93060046"/>
<dbReference type="KEGG" id="bma:BMA1096"/>
<dbReference type="PATRIC" id="fig|243160.12.peg.1129"/>
<dbReference type="eggNOG" id="COG0441">
    <property type="taxonomic scope" value="Bacteria"/>
</dbReference>
<dbReference type="HOGENOM" id="CLU_008554_0_1_4"/>
<dbReference type="Proteomes" id="UP000006693">
    <property type="component" value="Chromosome 1"/>
</dbReference>
<dbReference type="GO" id="GO:0005829">
    <property type="term" value="C:cytosol"/>
    <property type="evidence" value="ECO:0007669"/>
    <property type="project" value="TreeGrafter"/>
</dbReference>
<dbReference type="GO" id="GO:0005524">
    <property type="term" value="F:ATP binding"/>
    <property type="evidence" value="ECO:0007669"/>
    <property type="project" value="UniProtKB-UniRule"/>
</dbReference>
<dbReference type="GO" id="GO:0046872">
    <property type="term" value="F:metal ion binding"/>
    <property type="evidence" value="ECO:0007669"/>
    <property type="project" value="UniProtKB-KW"/>
</dbReference>
<dbReference type="GO" id="GO:0004829">
    <property type="term" value="F:threonine-tRNA ligase activity"/>
    <property type="evidence" value="ECO:0007669"/>
    <property type="project" value="UniProtKB-UniRule"/>
</dbReference>
<dbReference type="GO" id="GO:0000049">
    <property type="term" value="F:tRNA binding"/>
    <property type="evidence" value="ECO:0007669"/>
    <property type="project" value="UniProtKB-KW"/>
</dbReference>
<dbReference type="GO" id="GO:0006435">
    <property type="term" value="P:threonyl-tRNA aminoacylation"/>
    <property type="evidence" value="ECO:0007669"/>
    <property type="project" value="UniProtKB-UniRule"/>
</dbReference>
<dbReference type="CDD" id="cd01667">
    <property type="entry name" value="TGS_ThrRS"/>
    <property type="match status" value="1"/>
</dbReference>
<dbReference type="CDD" id="cd00860">
    <property type="entry name" value="ThrRS_anticodon"/>
    <property type="match status" value="1"/>
</dbReference>
<dbReference type="CDD" id="cd00771">
    <property type="entry name" value="ThrRS_core"/>
    <property type="match status" value="1"/>
</dbReference>
<dbReference type="FunFam" id="3.10.20.30:FF:000005">
    <property type="entry name" value="Threonine--tRNA ligase"/>
    <property type="match status" value="1"/>
</dbReference>
<dbReference type="FunFam" id="3.30.54.20:FF:000002">
    <property type="entry name" value="Threonine--tRNA ligase"/>
    <property type="match status" value="1"/>
</dbReference>
<dbReference type="FunFam" id="3.30.930.10:FF:000002">
    <property type="entry name" value="Threonine--tRNA ligase"/>
    <property type="match status" value="1"/>
</dbReference>
<dbReference type="FunFam" id="3.40.50.800:FF:000001">
    <property type="entry name" value="Threonine--tRNA ligase"/>
    <property type="match status" value="1"/>
</dbReference>
<dbReference type="FunFam" id="3.30.980.10:FF:000005">
    <property type="entry name" value="Threonyl-tRNA synthetase, mitochondrial"/>
    <property type="match status" value="1"/>
</dbReference>
<dbReference type="Gene3D" id="3.10.20.30">
    <property type="match status" value="1"/>
</dbReference>
<dbReference type="Gene3D" id="3.30.54.20">
    <property type="match status" value="1"/>
</dbReference>
<dbReference type="Gene3D" id="3.40.50.800">
    <property type="entry name" value="Anticodon-binding domain"/>
    <property type="match status" value="1"/>
</dbReference>
<dbReference type="Gene3D" id="3.30.930.10">
    <property type="entry name" value="Bira Bifunctional Protein, Domain 2"/>
    <property type="match status" value="1"/>
</dbReference>
<dbReference type="Gene3D" id="3.30.980.10">
    <property type="entry name" value="Threonyl-trna Synthetase, Chain A, domain 2"/>
    <property type="match status" value="1"/>
</dbReference>
<dbReference type="HAMAP" id="MF_00184">
    <property type="entry name" value="Thr_tRNA_synth"/>
    <property type="match status" value="1"/>
</dbReference>
<dbReference type="InterPro" id="IPR002314">
    <property type="entry name" value="aa-tRNA-synt_IIb"/>
</dbReference>
<dbReference type="InterPro" id="IPR006195">
    <property type="entry name" value="aa-tRNA-synth_II"/>
</dbReference>
<dbReference type="InterPro" id="IPR045864">
    <property type="entry name" value="aa-tRNA-synth_II/BPL/LPL"/>
</dbReference>
<dbReference type="InterPro" id="IPR004154">
    <property type="entry name" value="Anticodon-bd"/>
</dbReference>
<dbReference type="InterPro" id="IPR036621">
    <property type="entry name" value="Anticodon-bd_dom_sf"/>
</dbReference>
<dbReference type="InterPro" id="IPR012675">
    <property type="entry name" value="Beta-grasp_dom_sf"/>
</dbReference>
<dbReference type="InterPro" id="IPR004095">
    <property type="entry name" value="TGS"/>
</dbReference>
<dbReference type="InterPro" id="IPR012676">
    <property type="entry name" value="TGS-like"/>
</dbReference>
<dbReference type="InterPro" id="IPR002320">
    <property type="entry name" value="Thr-tRNA-ligase_IIa"/>
</dbReference>
<dbReference type="InterPro" id="IPR018163">
    <property type="entry name" value="Thr/Ala-tRNA-synth_IIc_edit"/>
</dbReference>
<dbReference type="InterPro" id="IPR047246">
    <property type="entry name" value="ThrRS_anticodon"/>
</dbReference>
<dbReference type="InterPro" id="IPR033728">
    <property type="entry name" value="ThrRS_core"/>
</dbReference>
<dbReference type="InterPro" id="IPR012947">
    <property type="entry name" value="tRNA_SAD"/>
</dbReference>
<dbReference type="NCBIfam" id="TIGR00418">
    <property type="entry name" value="thrS"/>
    <property type="match status" value="1"/>
</dbReference>
<dbReference type="PANTHER" id="PTHR11451:SF44">
    <property type="entry name" value="THREONINE--TRNA LIGASE, CHLOROPLASTIC_MITOCHONDRIAL 2"/>
    <property type="match status" value="1"/>
</dbReference>
<dbReference type="PANTHER" id="PTHR11451">
    <property type="entry name" value="THREONINE-TRNA LIGASE"/>
    <property type="match status" value="1"/>
</dbReference>
<dbReference type="Pfam" id="PF03129">
    <property type="entry name" value="HGTP_anticodon"/>
    <property type="match status" value="1"/>
</dbReference>
<dbReference type="Pfam" id="PF02824">
    <property type="entry name" value="TGS"/>
    <property type="match status" value="1"/>
</dbReference>
<dbReference type="Pfam" id="PF00587">
    <property type="entry name" value="tRNA-synt_2b"/>
    <property type="match status" value="1"/>
</dbReference>
<dbReference type="Pfam" id="PF07973">
    <property type="entry name" value="tRNA_SAD"/>
    <property type="match status" value="1"/>
</dbReference>
<dbReference type="PRINTS" id="PR01047">
    <property type="entry name" value="TRNASYNTHTHR"/>
</dbReference>
<dbReference type="SMART" id="SM00863">
    <property type="entry name" value="tRNA_SAD"/>
    <property type="match status" value="1"/>
</dbReference>
<dbReference type="SUPFAM" id="SSF52954">
    <property type="entry name" value="Class II aaRS ABD-related"/>
    <property type="match status" value="1"/>
</dbReference>
<dbReference type="SUPFAM" id="SSF55681">
    <property type="entry name" value="Class II aaRS and biotin synthetases"/>
    <property type="match status" value="1"/>
</dbReference>
<dbReference type="SUPFAM" id="SSF81271">
    <property type="entry name" value="TGS-like"/>
    <property type="match status" value="1"/>
</dbReference>
<dbReference type="SUPFAM" id="SSF55186">
    <property type="entry name" value="ThrRS/AlaRS common domain"/>
    <property type="match status" value="1"/>
</dbReference>
<dbReference type="PROSITE" id="PS50862">
    <property type="entry name" value="AA_TRNA_LIGASE_II"/>
    <property type="match status" value="1"/>
</dbReference>
<dbReference type="PROSITE" id="PS51880">
    <property type="entry name" value="TGS"/>
    <property type="match status" value="1"/>
</dbReference>
<reference key="1">
    <citation type="journal article" date="2004" name="Proc. Natl. Acad. Sci. U.S.A.">
        <title>Structural flexibility in the Burkholderia mallei genome.</title>
        <authorList>
            <person name="Nierman W.C."/>
            <person name="DeShazer D."/>
            <person name="Kim H.S."/>
            <person name="Tettelin H."/>
            <person name="Nelson K.E."/>
            <person name="Feldblyum T.V."/>
            <person name="Ulrich R.L."/>
            <person name="Ronning C.M."/>
            <person name="Brinkac L.M."/>
            <person name="Daugherty S.C."/>
            <person name="Davidsen T.D."/>
            <person name="DeBoy R.T."/>
            <person name="Dimitrov G."/>
            <person name="Dodson R.J."/>
            <person name="Durkin A.S."/>
            <person name="Gwinn M.L."/>
            <person name="Haft D.H."/>
            <person name="Khouri H.M."/>
            <person name="Kolonay J.F."/>
            <person name="Madupu R."/>
            <person name="Mohammoud Y."/>
            <person name="Nelson W.C."/>
            <person name="Radune D."/>
            <person name="Romero C.M."/>
            <person name="Sarria S."/>
            <person name="Selengut J."/>
            <person name="Shamblin C."/>
            <person name="Sullivan S.A."/>
            <person name="White O."/>
            <person name="Yu Y."/>
            <person name="Zafar N."/>
            <person name="Zhou L."/>
            <person name="Fraser C.M."/>
        </authorList>
    </citation>
    <scope>NUCLEOTIDE SEQUENCE [LARGE SCALE GENOMIC DNA]</scope>
    <source>
        <strain>ATCC 23344</strain>
    </source>
</reference>
<accession>Q62KI2</accession>
<gene>
    <name evidence="1" type="primary">thrS</name>
    <name type="ordered locus">BMA1096</name>
</gene>
<protein>
    <recommendedName>
        <fullName evidence="1">Threonine--tRNA ligase</fullName>
        <ecNumber evidence="1">6.1.1.3</ecNumber>
    </recommendedName>
    <alternativeName>
        <fullName evidence="1">Threonyl-tRNA synthetase</fullName>
        <shortName evidence="1">ThrRS</shortName>
    </alternativeName>
</protein>
<name>SYT_BURMA</name>
<feature type="chain" id="PRO_0000100953" description="Threonine--tRNA ligase">
    <location>
        <begin position="1"/>
        <end position="635"/>
    </location>
</feature>
<feature type="domain" description="TGS" evidence="2">
    <location>
        <begin position="1"/>
        <end position="61"/>
    </location>
</feature>
<feature type="region of interest" description="Catalytic" evidence="1">
    <location>
        <begin position="242"/>
        <end position="533"/>
    </location>
</feature>
<feature type="binding site" evidence="1">
    <location>
        <position position="333"/>
    </location>
    <ligand>
        <name>Zn(2+)</name>
        <dbReference type="ChEBI" id="CHEBI:29105"/>
    </ligand>
</feature>
<feature type="binding site" evidence="1">
    <location>
        <position position="384"/>
    </location>
    <ligand>
        <name>Zn(2+)</name>
        <dbReference type="ChEBI" id="CHEBI:29105"/>
    </ligand>
</feature>
<feature type="binding site" evidence="1">
    <location>
        <position position="510"/>
    </location>
    <ligand>
        <name>Zn(2+)</name>
        <dbReference type="ChEBI" id="CHEBI:29105"/>
    </ligand>
</feature>
<keyword id="KW-0030">Aminoacyl-tRNA synthetase</keyword>
<keyword id="KW-0067">ATP-binding</keyword>
<keyword id="KW-0963">Cytoplasm</keyword>
<keyword id="KW-0436">Ligase</keyword>
<keyword id="KW-0479">Metal-binding</keyword>
<keyword id="KW-0547">Nucleotide-binding</keyword>
<keyword id="KW-0648">Protein biosynthesis</keyword>
<keyword id="KW-1185">Reference proteome</keyword>
<keyword id="KW-0694">RNA-binding</keyword>
<keyword id="KW-0820">tRNA-binding</keyword>
<keyword id="KW-0862">Zinc</keyword>
<sequence>MVSIRLPDGSVRQYEHPVTVAEVAASIGPGLAKAALGGKLDGELVDTSALIDRDASLAIVTDKDADGLDIIRHSTAHLLAYAVKELHPDAQVTIGPVIDNGFYYDFSYHRPFTPEDLEAIEKRMQELAKRDEPVTRRVVSRDEAVSYFRSIGEKYKAEIIESIPASDEIKLYSHGSFTDLCRGPHVPSTGKLKVFKLMKVAGAYWRGDSKNEQLQRIYGTAWTRKEDQDAYLHMLEEAEKRDHRKLGKQLDLFHIQEEAPGMVFWHPKGWTLWQQVEQYMRRRLDAAGYLEIKTPMIMDRSLWEASGHWQNYRENMFTTESEKRDYAIKPMNCPGHVQVFKHGLRSYRDLPLRYAEFGSCHRNEASGALHGLMRVRGFVQDDAHIFCTEDQINSEAIAFNKLAMSVYEDFGFDRIDIKLSLRPEQRMGSDETWDHAEEGLRNALKACGLEWEELPGEGAFYGPKIEYHIKDALGRSWQCGTLQLDMMLPERLGAEYVAEDNSRRRPVMLHRAIVGSMERFLGILIEHHAGAMPVWLAPAHAVVLNIAESQAEYARTVAQSLQKQGLRVSADLRNEKISYKIREHTLEKVPYLLVVGDKEREAQTVAVRARGGVDLGVMPVEAFVERLREDIQAFK</sequence>
<proteinExistence type="inferred from homology"/>
<comment type="function">
    <text evidence="1">Catalyzes the attachment of threonine to tRNA(Thr) in a two-step reaction: L-threonine is first activated by ATP to form Thr-AMP and then transferred to the acceptor end of tRNA(Thr). Also edits incorrectly charged L-seryl-tRNA(Thr).</text>
</comment>
<comment type="catalytic activity">
    <reaction evidence="1">
        <text>tRNA(Thr) + L-threonine + ATP = L-threonyl-tRNA(Thr) + AMP + diphosphate + H(+)</text>
        <dbReference type="Rhea" id="RHEA:24624"/>
        <dbReference type="Rhea" id="RHEA-COMP:9670"/>
        <dbReference type="Rhea" id="RHEA-COMP:9704"/>
        <dbReference type="ChEBI" id="CHEBI:15378"/>
        <dbReference type="ChEBI" id="CHEBI:30616"/>
        <dbReference type="ChEBI" id="CHEBI:33019"/>
        <dbReference type="ChEBI" id="CHEBI:57926"/>
        <dbReference type="ChEBI" id="CHEBI:78442"/>
        <dbReference type="ChEBI" id="CHEBI:78534"/>
        <dbReference type="ChEBI" id="CHEBI:456215"/>
        <dbReference type="EC" id="6.1.1.3"/>
    </reaction>
</comment>
<comment type="cofactor">
    <cofactor evidence="1">
        <name>Zn(2+)</name>
        <dbReference type="ChEBI" id="CHEBI:29105"/>
    </cofactor>
    <text evidence="1">Binds 1 zinc ion per subunit.</text>
</comment>
<comment type="subunit">
    <text evidence="1">Homodimer.</text>
</comment>
<comment type="subcellular location">
    <subcellularLocation>
        <location evidence="1">Cytoplasm</location>
    </subcellularLocation>
</comment>
<comment type="similarity">
    <text evidence="1">Belongs to the class-II aminoacyl-tRNA synthetase family.</text>
</comment>
<organism>
    <name type="scientific">Burkholderia mallei (strain ATCC 23344)</name>
    <dbReference type="NCBI Taxonomy" id="243160"/>
    <lineage>
        <taxon>Bacteria</taxon>
        <taxon>Pseudomonadati</taxon>
        <taxon>Pseudomonadota</taxon>
        <taxon>Betaproteobacteria</taxon>
        <taxon>Burkholderiales</taxon>
        <taxon>Burkholderiaceae</taxon>
        <taxon>Burkholderia</taxon>
        <taxon>pseudomallei group</taxon>
    </lineage>
</organism>